<name>HSP74_PONAB</name>
<feature type="chain" id="PRO_0000255933" description="Heat shock 70 kDa protein 4">
    <location>
        <begin position="1"/>
        <end position="840"/>
    </location>
</feature>
<feature type="region of interest" description="Disordered" evidence="4">
    <location>
        <begin position="500"/>
        <end position="575"/>
    </location>
</feature>
<feature type="region of interest" description="Disordered" evidence="4">
    <location>
        <begin position="783"/>
        <end position="840"/>
    </location>
</feature>
<feature type="compositionally biased region" description="Basic and acidic residues" evidence="4">
    <location>
        <begin position="514"/>
        <end position="533"/>
    </location>
</feature>
<feature type="compositionally biased region" description="Basic and acidic residues" evidence="4">
    <location>
        <begin position="788"/>
        <end position="799"/>
    </location>
</feature>
<feature type="compositionally biased region" description="Basic and acidic residues" evidence="4">
    <location>
        <begin position="829"/>
        <end position="840"/>
    </location>
</feature>
<feature type="modified residue" description="N6-acetyllysine" evidence="3">
    <location>
        <position position="53"/>
    </location>
</feature>
<feature type="modified residue" description="Phosphoserine" evidence="2">
    <location>
        <position position="76"/>
    </location>
</feature>
<feature type="modified residue" description="Phosphotyrosine" evidence="2">
    <location>
        <position position="89"/>
    </location>
</feature>
<feature type="modified residue" description="Phosphotyrosine" evidence="2">
    <location>
        <position position="336"/>
    </location>
</feature>
<feature type="modified residue" description="Phosphoserine" evidence="2">
    <location>
        <position position="393"/>
    </location>
</feature>
<feature type="modified residue" description="Phosphoserine" evidence="3">
    <location>
        <position position="415"/>
    </location>
</feature>
<feature type="modified residue" description="N6-acetyllysine" evidence="2">
    <location>
        <position position="430"/>
    </location>
</feature>
<feature type="modified residue" description="Phosphothreonine" evidence="2">
    <location>
        <position position="538"/>
    </location>
</feature>
<feature type="modified residue" description="Phosphoserine" evidence="2">
    <location>
        <position position="546"/>
    </location>
</feature>
<feature type="modified residue" description="Phosphoserine" evidence="2">
    <location>
        <position position="647"/>
    </location>
</feature>
<feature type="modified residue" description="Phosphotyrosine" evidence="3">
    <location>
        <position position="660"/>
    </location>
</feature>
<feature type="modified residue" description="N6-acetyllysine" evidence="2">
    <location>
        <position position="679"/>
    </location>
</feature>
<feature type="modified residue" description="Phosphoserine" evidence="2">
    <location>
        <position position="756"/>
    </location>
</feature>
<feature type="modified residue" description="N6-methyllysine" evidence="2">
    <location>
        <position position="773"/>
    </location>
</feature>
<dbReference type="EMBL" id="CR857880">
    <property type="protein sequence ID" value="CAH90133.1"/>
    <property type="molecule type" value="mRNA"/>
</dbReference>
<dbReference type="RefSeq" id="NP_001125029.1">
    <property type="nucleotide sequence ID" value="NM_001131557.1"/>
</dbReference>
<dbReference type="SMR" id="Q5RDM4"/>
<dbReference type="FunCoup" id="Q5RDM4">
    <property type="interactions" value="4045"/>
</dbReference>
<dbReference type="STRING" id="9601.ENSPPYP00000017643"/>
<dbReference type="Ensembl" id="ENSPPYT00000018354.3">
    <property type="protein sequence ID" value="ENSPPYP00000017643.3"/>
    <property type="gene ID" value="ENSPPYG00000015777.3"/>
</dbReference>
<dbReference type="GeneID" id="100171909"/>
<dbReference type="KEGG" id="pon:100171909"/>
<dbReference type="CTD" id="3308"/>
<dbReference type="eggNOG" id="KOG0103">
    <property type="taxonomic scope" value="Eukaryota"/>
</dbReference>
<dbReference type="GeneTree" id="ENSGT00940000156067"/>
<dbReference type="InParanoid" id="Q5RDM4"/>
<dbReference type="OMA" id="KEYECIE"/>
<dbReference type="OrthoDB" id="434160at2759"/>
<dbReference type="Proteomes" id="UP000001595">
    <property type="component" value="Chromosome 5"/>
</dbReference>
<dbReference type="GO" id="GO:0005829">
    <property type="term" value="C:cytosol"/>
    <property type="evidence" value="ECO:0007669"/>
    <property type="project" value="Ensembl"/>
</dbReference>
<dbReference type="GO" id="GO:0070062">
    <property type="term" value="C:extracellular exosome"/>
    <property type="evidence" value="ECO:0007669"/>
    <property type="project" value="Ensembl"/>
</dbReference>
<dbReference type="GO" id="GO:0005739">
    <property type="term" value="C:mitochondrion"/>
    <property type="evidence" value="ECO:0007669"/>
    <property type="project" value="GOC"/>
</dbReference>
<dbReference type="GO" id="GO:0005634">
    <property type="term" value="C:nucleus"/>
    <property type="evidence" value="ECO:0007669"/>
    <property type="project" value="TreeGrafter"/>
</dbReference>
<dbReference type="GO" id="GO:0005524">
    <property type="term" value="F:ATP binding"/>
    <property type="evidence" value="ECO:0007669"/>
    <property type="project" value="UniProtKB-KW"/>
</dbReference>
<dbReference type="GO" id="GO:0140662">
    <property type="term" value="F:ATP-dependent protein folding chaperone"/>
    <property type="evidence" value="ECO:0007669"/>
    <property type="project" value="InterPro"/>
</dbReference>
<dbReference type="GO" id="GO:0051131">
    <property type="term" value="P:chaperone-mediated protein complex assembly"/>
    <property type="evidence" value="ECO:0007669"/>
    <property type="project" value="Ensembl"/>
</dbReference>
<dbReference type="GO" id="GO:0045040">
    <property type="term" value="P:protein insertion into mitochondrial outer membrane"/>
    <property type="evidence" value="ECO:0007669"/>
    <property type="project" value="Ensembl"/>
</dbReference>
<dbReference type="CDD" id="cd11737">
    <property type="entry name" value="ASKHA_NBD_HSP70_HSPA4"/>
    <property type="match status" value="1"/>
</dbReference>
<dbReference type="FunFam" id="1.20.1270.10:FF:000002">
    <property type="entry name" value="Heat shock 70 kDa protein 4"/>
    <property type="match status" value="1"/>
</dbReference>
<dbReference type="FunFam" id="3.30.30.30:FF:000002">
    <property type="entry name" value="Heat shock 70 kDa protein 4"/>
    <property type="match status" value="1"/>
</dbReference>
<dbReference type="FunFam" id="3.30.420.40:FF:000171">
    <property type="entry name" value="Heat shock 70 kDa protein 4"/>
    <property type="match status" value="1"/>
</dbReference>
<dbReference type="FunFam" id="3.90.640.10:FF:000004">
    <property type="entry name" value="Heat shock 70 kDa protein 4"/>
    <property type="match status" value="1"/>
</dbReference>
<dbReference type="FunFam" id="1.20.1270.10:FF:000018">
    <property type="entry name" value="heat shock 70 kDa protein 4 isoform X1"/>
    <property type="match status" value="1"/>
</dbReference>
<dbReference type="FunFam" id="2.60.34.10:FF:000010">
    <property type="entry name" value="heat shock 70 kDa protein 4 isoform X1"/>
    <property type="match status" value="1"/>
</dbReference>
<dbReference type="FunFam" id="3.30.420.40:FF:000495">
    <property type="entry name" value="Heat shock protein 4b"/>
    <property type="match status" value="1"/>
</dbReference>
<dbReference type="FunFam" id="3.30.420.40:FF:000767">
    <property type="entry name" value="Heat shock protein 70 (HSP70)-4, putative"/>
    <property type="match status" value="2"/>
</dbReference>
<dbReference type="Gene3D" id="1.20.1270.10">
    <property type="match status" value="2"/>
</dbReference>
<dbReference type="Gene3D" id="3.30.30.30">
    <property type="match status" value="1"/>
</dbReference>
<dbReference type="Gene3D" id="3.30.420.40">
    <property type="match status" value="2"/>
</dbReference>
<dbReference type="Gene3D" id="3.90.640.10">
    <property type="entry name" value="Actin, Chain A, domain 4"/>
    <property type="match status" value="1"/>
</dbReference>
<dbReference type="Gene3D" id="2.60.34.10">
    <property type="entry name" value="Substrate Binding Domain Of DNAk, Chain A, domain 1"/>
    <property type="match status" value="1"/>
</dbReference>
<dbReference type="InterPro" id="IPR043129">
    <property type="entry name" value="ATPase_NBD"/>
</dbReference>
<dbReference type="InterPro" id="IPR018181">
    <property type="entry name" value="Heat_shock_70_CS"/>
</dbReference>
<dbReference type="InterPro" id="IPR029048">
    <property type="entry name" value="HSP70_C_sf"/>
</dbReference>
<dbReference type="InterPro" id="IPR029047">
    <property type="entry name" value="HSP70_peptide-bd_sf"/>
</dbReference>
<dbReference type="InterPro" id="IPR013126">
    <property type="entry name" value="Hsp_70_fam"/>
</dbReference>
<dbReference type="InterPro" id="IPR042052">
    <property type="entry name" value="HSPA4_NBD"/>
</dbReference>
<dbReference type="PANTHER" id="PTHR45639:SF6">
    <property type="entry name" value="HEAT SHOCK 70 KDA PROTEIN 4"/>
    <property type="match status" value="1"/>
</dbReference>
<dbReference type="PANTHER" id="PTHR45639">
    <property type="entry name" value="HSC70CB, ISOFORM G-RELATED"/>
    <property type="match status" value="1"/>
</dbReference>
<dbReference type="Pfam" id="PF00012">
    <property type="entry name" value="HSP70"/>
    <property type="match status" value="1"/>
</dbReference>
<dbReference type="PRINTS" id="PR00301">
    <property type="entry name" value="HEATSHOCK70"/>
</dbReference>
<dbReference type="SUPFAM" id="SSF53067">
    <property type="entry name" value="Actin-like ATPase domain"/>
    <property type="match status" value="2"/>
</dbReference>
<dbReference type="SUPFAM" id="SSF100934">
    <property type="entry name" value="Heat shock protein 70kD (HSP70), C-terminal subdomain"/>
    <property type="match status" value="2"/>
</dbReference>
<dbReference type="SUPFAM" id="SSF100920">
    <property type="entry name" value="Heat shock protein 70kD (HSP70), peptide-binding domain"/>
    <property type="match status" value="1"/>
</dbReference>
<dbReference type="PROSITE" id="PS00329">
    <property type="entry name" value="HSP70_2"/>
    <property type="match status" value="1"/>
</dbReference>
<dbReference type="PROSITE" id="PS01036">
    <property type="entry name" value="HSP70_3"/>
    <property type="match status" value="1"/>
</dbReference>
<accession>Q5RDM4</accession>
<proteinExistence type="evidence at transcript level"/>
<keyword id="KW-0007">Acetylation</keyword>
<keyword id="KW-0067">ATP-binding</keyword>
<keyword id="KW-0963">Cytoplasm</keyword>
<keyword id="KW-0488">Methylation</keyword>
<keyword id="KW-0547">Nucleotide-binding</keyword>
<keyword id="KW-0597">Phosphoprotein</keyword>
<keyword id="KW-1185">Reference proteome</keyword>
<keyword id="KW-0346">Stress response</keyword>
<reference key="1">
    <citation type="submission" date="2004-11" db="EMBL/GenBank/DDBJ databases">
        <authorList>
            <consortium name="The German cDNA consortium"/>
        </authorList>
    </citation>
    <scope>NUCLEOTIDE SEQUENCE [LARGE SCALE MRNA]</scope>
    <source>
        <tissue>Brain cortex</tissue>
    </source>
</reference>
<evidence type="ECO:0000250" key="1"/>
<evidence type="ECO:0000250" key="2">
    <source>
        <dbReference type="UniProtKB" id="P34932"/>
    </source>
</evidence>
<evidence type="ECO:0000250" key="3">
    <source>
        <dbReference type="UniProtKB" id="Q61316"/>
    </source>
</evidence>
<evidence type="ECO:0000256" key="4">
    <source>
        <dbReference type="SAM" id="MobiDB-lite"/>
    </source>
</evidence>
<evidence type="ECO:0000305" key="5"/>
<protein>
    <recommendedName>
        <fullName>Heat shock 70 kDa protein 4</fullName>
    </recommendedName>
</protein>
<gene>
    <name type="primary">HSPA4</name>
    <name evidence="2" type="synonym">HSPH2</name>
</gene>
<sequence>MSVVGIDLGFQSCYVAVARAGGIETIANEYSDRCTPACISFGPKNRSIGAAAKSQVISNAKNTVQGFKRFHGRAFSDPFVEAEKSNLAYDVVQLPTGLTGIKVTYMEEERNFTTEQVTAMLLSKLKETAESVLKKPVVDCVVSVPCFYTDAERRSVMDATQIAGLNCLRLMNETTAVALAYGIYKQDLPALEEKPRNVVFVDMGHSAYQVSVCAFNRGKLKVLATAFDTTLGGRKFDEVLVNHFCEEFGKKYKLDIKSKIRALLRLSQECEKLKKLMSANASDLPLSIECFMNDVDVSGTMNRGKFLEMCNDLLARVEPPLRSVLEQTKLKKEDIYAVEIVGGATRIPAVKEKISKFFGKELSTTLNADEAVTRGCALQCAILSPAFKVREFSITDVVPYPISLRWNSPAEEGSSDCEVFSKNHAAPFSKVLTFYRKEPFTLEAYYSSPQDLPYPDPAIAQFSVQKVTPQSDGSSSKVKVKVRVNVHGIFSVSSASLVEVHKSEENEEPMETDQNAKEEEKMQVDQEEPHVEEQQQQTPAENKAESEEMETSQAGSKDKKMDQPPQAKKAKVKTSTVDLPIENQLLWQIDREMLNLYIENEGKMIMQDKLEKERNDAKNAVEEYVYEMRDKLSGEYEKFVSEDDRNSFTLKLEDTENWLYEDGEDQPKQVYVDKLAELKNLGQPIKIRFQESEERPKLFEELGKQIQQYMKIISSFKNKEDQYDHLDAADMTKVEKSTNEAMEWMNNKLNLQNKQSLTMDPVVKSKEIEAKIKELTSICSPIISKPKPKVEPPKEEQKNAEQNGPVDGQGDNPGPQAAEQGTDAAVPSDSDKKLPEMDID</sequence>
<comment type="subunit">
    <text evidence="1">Interacts with TJP1/ZO-1.</text>
</comment>
<comment type="subcellular location">
    <subcellularLocation>
        <location evidence="5">Cytoplasm</location>
    </subcellularLocation>
</comment>
<comment type="similarity">
    <text evidence="5">Belongs to the heat shock protein 70 family.</text>
</comment>
<organism>
    <name type="scientific">Pongo abelii</name>
    <name type="common">Sumatran orangutan</name>
    <name type="synonym">Pongo pygmaeus abelii</name>
    <dbReference type="NCBI Taxonomy" id="9601"/>
    <lineage>
        <taxon>Eukaryota</taxon>
        <taxon>Metazoa</taxon>
        <taxon>Chordata</taxon>
        <taxon>Craniata</taxon>
        <taxon>Vertebrata</taxon>
        <taxon>Euteleostomi</taxon>
        <taxon>Mammalia</taxon>
        <taxon>Eutheria</taxon>
        <taxon>Euarchontoglires</taxon>
        <taxon>Primates</taxon>
        <taxon>Haplorrhini</taxon>
        <taxon>Catarrhini</taxon>
        <taxon>Hominidae</taxon>
        <taxon>Pongo</taxon>
    </lineage>
</organism>